<organism>
    <name type="scientific">Thermotoga petrophila (strain ATCC BAA-488 / DSM 13995 / JCM 10881 / RKU-1)</name>
    <dbReference type="NCBI Taxonomy" id="390874"/>
    <lineage>
        <taxon>Bacteria</taxon>
        <taxon>Thermotogati</taxon>
        <taxon>Thermotogota</taxon>
        <taxon>Thermotogae</taxon>
        <taxon>Thermotogales</taxon>
        <taxon>Thermotogaceae</taxon>
        <taxon>Thermotoga</taxon>
    </lineage>
</organism>
<gene>
    <name evidence="1" type="primary">rplC</name>
    <name type="ordered locus">Tpet_1292</name>
</gene>
<reference key="1">
    <citation type="submission" date="2007-05" db="EMBL/GenBank/DDBJ databases">
        <title>Complete sequence of Thermotoga petrophila RKU-1.</title>
        <authorList>
            <consortium name="US DOE Joint Genome Institute"/>
            <person name="Copeland A."/>
            <person name="Lucas S."/>
            <person name="Lapidus A."/>
            <person name="Barry K."/>
            <person name="Glavina del Rio T."/>
            <person name="Dalin E."/>
            <person name="Tice H."/>
            <person name="Pitluck S."/>
            <person name="Sims D."/>
            <person name="Brettin T."/>
            <person name="Bruce D."/>
            <person name="Detter J.C."/>
            <person name="Han C."/>
            <person name="Tapia R."/>
            <person name="Schmutz J."/>
            <person name="Larimer F."/>
            <person name="Land M."/>
            <person name="Hauser L."/>
            <person name="Kyrpides N."/>
            <person name="Mikhailova N."/>
            <person name="Nelson K."/>
            <person name="Gogarten J.P."/>
            <person name="Noll K."/>
            <person name="Richardson P."/>
        </authorList>
    </citation>
    <scope>NUCLEOTIDE SEQUENCE [LARGE SCALE GENOMIC DNA]</scope>
    <source>
        <strain>ATCC BAA-488 / DSM 13995 / JCM 10881 / RKU-1</strain>
    </source>
</reference>
<name>RL3_THEP1</name>
<dbReference type="EMBL" id="CP000702">
    <property type="protein sequence ID" value="ABQ47306.1"/>
    <property type="molecule type" value="Genomic_DNA"/>
</dbReference>
<dbReference type="RefSeq" id="WP_004081835.1">
    <property type="nucleotide sequence ID" value="NC_009486.1"/>
</dbReference>
<dbReference type="SMR" id="A5IM83"/>
<dbReference type="STRING" id="390874.Tpet_1292"/>
<dbReference type="KEGG" id="tpt:Tpet_1292"/>
<dbReference type="eggNOG" id="COG0087">
    <property type="taxonomic scope" value="Bacteria"/>
</dbReference>
<dbReference type="HOGENOM" id="CLU_044142_4_1_0"/>
<dbReference type="Proteomes" id="UP000006558">
    <property type="component" value="Chromosome"/>
</dbReference>
<dbReference type="GO" id="GO:0022625">
    <property type="term" value="C:cytosolic large ribosomal subunit"/>
    <property type="evidence" value="ECO:0007669"/>
    <property type="project" value="TreeGrafter"/>
</dbReference>
<dbReference type="GO" id="GO:0019843">
    <property type="term" value="F:rRNA binding"/>
    <property type="evidence" value="ECO:0007669"/>
    <property type="project" value="UniProtKB-UniRule"/>
</dbReference>
<dbReference type="GO" id="GO:0003735">
    <property type="term" value="F:structural constituent of ribosome"/>
    <property type="evidence" value="ECO:0007669"/>
    <property type="project" value="InterPro"/>
</dbReference>
<dbReference type="GO" id="GO:0006412">
    <property type="term" value="P:translation"/>
    <property type="evidence" value="ECO:0007669"/>
    <property type="project" value="UniProtKB-UniRule"/>
</dbReference>
<dbReference type="FunFam" id="2.40.30.10:FF:000004">
    <property type="entry name" value="50S ribosomal protein L3"/>
    <property type="match status" value="1"/>
</dbReference>
<dbReference type="FunFam" id="3.30.160.810:FF:000001">
    <property type="entry name" value="50S ribosomal protein L3"/>
    <property type="match status" value="1"/>
</dbReference>
<dbReference type="Gene3D" id="3.30.160.810">
    <property type="match status" value="1"/>
</dbReference>
<dbReference type="Gene3D" id="2.40.30.10">
    <property type="entry name" value="Translation factors"/>
    <property type="match status" value="1"/>
</dbReference>
<dbReference type="HAMAP" id="MF_01325_B">
    <property type="entry name" value="Ribosomal_uL3_B"/>
    <property type="match status" value="1"/>
</dbReference>
<dbReference type="InterPro" id="IPR000597">
    <property type="entry name" value="Ribosomal_uL3"/>
</dbReference>
<dbReference type="InterPro" id="IPR019927">
    <property type="entry name" value="Ribosomal_uL3_bac/org-type"/>
</dbReference>
<dbReference type="InterPro" id="IPR019926">
    <property type="entry name" value="Ribosomal_uL3_CS"/>
</dbReference>
<dbReference type="InterPro" id="IPR009000">
    <property type="entry name" value="Transl_B-barrel_sf"/>
</dbReference>
<dbReference type="NCBIfam" id="TIGR03625">
    <property type="entry name" value="L3_bact"/>
    <property type="match status" value="1"/>
</dbReference>
<dbReference type="PANTHER" id="PTHR11229">
    <property type="entry name" value="50S RIBOSOMAL PROTEIN L3"/>
    <property type="match status" value="1"/>
</dbReference>
<dbReference type="PANTHER" id="PTHR11229:SF16">
    <property type="entry name" value="LARGE RIBOSOMAL SUBUNIT PROTEIN UL3C"/>
    <property type="match status" value="1"/>
</dbReference>
<dbReference type="Pfam" id="PF00297">
    <property type="entry name" value="Ribosomal_L3"/>
    <property type="match status" value="1"/>
</dbReference>
<dbReference type="SUPFAM" id="SSF50447">
    <property type="entry name" value="Translation proteins"/>
    <property type="match status" value="1"/>
</dbReference>
<dbReference type="PROSITE" id="PS00474">
    <property type="entry name" value="RIBOSOMAL_L3"/>
    <property type="match status" value="1"/>
</dbReference>
<feature type="chain" id="PRO_1000052162" description="Large ribosomal subunit protein uL3">
    <location>
        <begin position="1"/>
        <end position="207"/>
    </location>
</feature>
<accession>A5IM83</accession>
<keyword id="KW-0687">Ribonucleoprotein</keyword>
<keyword id="KW-0689">Ribosomal protein</keyword>
<keyword id="KW-0694">RNA-binding</keyword>
<keyword id="KW-0699">rRNA-binding</keyword>
<evidence type="ECO:0000255" key="1">
    <source>
        <dbReference type="HAMAP-Rule" id="MF_01325"/>
    </source>
</evidence>
<evidence type="ECO:0000305" key="2"/>
<sequence length="207" mass="22784">MKMIIGRKIGMTRVFVGNDSVPVTVIKAGPCVVVQKKTVEKDGYNAVQLGFEKAKKVNKPLAGHFKKFGVEPMKILREFRVENPDEYEPGQVIKVDVFEKGEYVDVTGWTKGRGFAGAMKRWGFSGGPKSHGSKFHRELGSVGQHTEPAKIWKGKKMPGRYGNERVTVRNLQVVDIDPENDLLVVKGGVPGARGGLVLIRSAKAPKK</sequence>
<comment type="function">
    <text evidence="1">One of the primary rRNA binding proteins, it binds directly near the 3'-end of the 23S rRNA, where it nucleates assembly of the 50S subunit.</text>
</comment>
<comment type="subunit">
    <text evidence="1">Part of the 50S ribosomal subunit. Forms a cluster with proteins L14 and L19.</text>
</comment>
<comment type="similarity">
    <text evidence="1">Belongs to the universal ribosomal protein uL3 family.</text>
</comment>
<proteinExistence type="inferred from homology"/>
<protein>
    <recommendedName>
        <fullName evidence="1">Large ribosomal subunit protein uL3</fullName>
    </recommendedName>
    <alternativeName>
        <fullName evidence="2">50S ribosomal protein L3</fullName>
    </alternativeName>
</protein>